<gene>
    <name evidence="1" type="primary">nadA</name>
    <name type="ordered locus">Tpet_1147</name>
</gene>
<comment type="function">
    <text evidence="1">Catalyzes the condensation of iminoaspartate with dihydroxyacetone phosphate to form quinolinate.</text>
</comment>
<comment type="catalytic activity">
    <reaction evidence="1">
        <text>iminosuccinate + dihydroxyacetone phosphate = quinolinate + phosphate + 2 H2O + H(+)</text>
        <dbReference type="Rhea" id="RHEA:25888"/>
        <dbReference type="ChEBI" id="CHEBI:15377"/>
        <dbReference type="ChEBI" id="CHEBI:15378"/>
        <dbReference type="ChEBI" id="CHEBI:29959"/>
        <dbReference type="ChEBI" id="CHEBI:43474"/>
        <dbReference type="ChEBI" id="CHEBI:57642"/>
        <dbReference type="ChEBI" id="CHEBI:77875"/>
        <dbReference type="EC" id="2.5.1.72"/>
    </reaction>
    <physiologicalReaction direction="left-to-right" evidence="1">
        <dbReference type="Rhea" id="RHEA:25889"/>
    </physiologicalReaction>
</comment>
<comment type="cofactor">
    <cofactor evidence="1">
        <name>[4Fe-4S] cluster</name>
        <dbReference type="ChEBI" id="CHEBI:49883"/>
    </cofactor>
    <text evidence="1">Binds 1 [4Fe-4S] cluster per subunit.</text>
</comment>
<comment type="pathway">
    <text evidence="1">Cofactor biosynthesis; NAD(+) biosynthesis; quinolinate from iminoaspartate: step 1/1.</text>
</comment>
<comment type="subcellular location">
    <subcellularLocation>
        <location evidence="1">Cytoplasm</location>
    </subcellularLocation>
</comment>
<comment type="similarity">
    <text evidence="1">Belongs to the quinolinate synthase family. Type 2 subfamily.</text>
</comment>
<accession>A5ILT8</accession>
<feature type="chain" id="PRO_1000061164" description="Quinolinate synthase">
    <location>
        <begin position="1"/>
        <end position="298"/>
    </location>
</feature>
<feature type="binding site" evidence="1">
    <location>
        <position position="19"/>
    </location>
    <ligand>
        <name>iminosuccinate</name>
        <dbReference type="ChEBI" id="CHEBI:77875"/>
    </ligand>
</feature>
<feature type="binding site" evidence="1">
    <location>
        <position position="36"/>
    </location>
    <ligand>
        <name>iminosuccinate</name>
        <dbReference type="ChEBI" id="CHEBI:77875"/>
    </ligand>
</feature>
<feature type="binding site" evidence="1">
    <location>
        <position position="81"/>
    </location>
    <ligand>
        <name>[4Fe-4S] cluster</name>
        <dbReference type="ChEBI" id="CHEBI:49883"/>
    </ligand>
</feature>
<feature type="binding site" evidence="1">
    <location>
        <begin position="107"/>
        <end position="109"/>
    </location>
    <ligand>
        <name>iminosuccinate</name>
        <dbReference type="ChEBI" id="CHEBI:77875"/>
    </ligand>
</feature>
<feature type="binding site" evidence="1">
    <location>
        <position position="124"/>
    </location>
    <ligand>
        <name>iminosuccinate</name>
        <dbReference type="ChEBI" id="CHEBI:77875"/>
    </ligand>
</feature>
<feature type="binding site" evidence="1">
    <location>
        <position position="168"/>
    </location>
    <ligand>
        <name>[4Fe-4S] cluster</name>
        <dbReference type="ChEBI" id="CHEBI:49883"/>
    </ligand>
</feature>
<feature type="binding site" evidence="1">
    <location>
        <begin position="193"/>
        <end position="195"/>
    </location>
    <ligand>
        <name>iminosuccinate</name>
        <dbReference type="ChEBI" id="CHEBI:77875"/>
    </ligand>
</feature>
<feature type="binding site" evidence="1">
    <location>
        <position position="210"/>
    </location>
    <ligand>
        <name>iminosuccinate</name>
        <dbReference type="ChEBI" id="CHEBI:77875"/>
    </ligand>
</feature>
<feature type="binding site" evidence="1">
    <location>
        <position position="254"/>
    </location>
    <ligand>
        <name>[4Fe-4S] cluster</name>
        <dbReference type="ChEBI" id="CHEBI:49883"/>
    </ligand>
</feature>
<sequence length="298" mass="33543">MVDEILKLKKEKGYIILAHNYQIPELQDIADFVGDSLQLARKAMELSEKKILFLGVDFMAELVKILNPDKKVIVPDKSATCPMANRLTPEIIREYREKFPGAPVVLYVNSTSECKTLADVICTSANAVEVVKRLDSSVVIFGPDRNLGEYVAEKTGKKVITIPENGHCPVHQFNAESIDAVRKKYPDAKVIVHPESPKPVRDKADYVGSTGQMEKIPEKDPSRIFVIGTEIGMIHKLKKKFPDREFVPLEMAVCVNMKKNTLENTLHALQTESFEVILPKEVIEKAKKPILRMFELMG</sequence>
<keyword id="KW-0004">4Fe-4S</keyword>
<keyword id="KW-0963">Cytoplasm</keyword>
<keyword id="KW-0408">Iron</keyword>
<keyword id="KW-0411">Iron-sulfur</keyword>
<keyword id="KW-0479">Metal-binding</keyword>
<keyword id="KW-0662">Pyridine nucleotide biosynthesis</keyword>
<keyword id="KW-0808">Transferase</keyword>
<organism>
    <name type="scientific">Thermotoga petrophila (strain ATCC BAA-488 / DSM 13995 / JCM 10881 / RKU-1)</name>
    <dbReference type="NCBI Taxonomy" id="390874"/>
    <lineage>
        <taxon>Bacteria</taxon>
        <taxon>Thermotogati</taxon>
        <taxon>Thermotogota</taxon>
        <taxon>Thermotogae</taxon>
        <taxon>Thermotogales</taxon>
        <taxon>Thermotogaceae</taxon>
        <taxon>Thermotoga</taxon>
    </lineage>
</organism>
<proteinExistence type="inferred from homology"/>
<reference key="1">
    <citation type="submission" date="2007-05" db="EMBL/GenBank/DDBJ databases">
        <title>Complete sequence of Thermotoga petrophila RKU-1.</title>
        <authorList>
            <consortium name="US DOE Joint Genome Institute"/>
            <person name="Copeland A."/>
            <person name="Lucas S."/>
            <person name="Lapidus A."/>
            <person name="Barry K."/>
            <person name="Glavina del Rio T."/>
            <person name="Dalin E."/>
            <person name="Tice H."/>
            <person name="Pitluck S."/>
            <person name="Sims D."/>
            <person name="Brettin T."/>
            <person name="Bruce D."/>
            <person name="Detter J.C."/>
            <person name="Han C."/>
            <person name="Tapia R."/>
            <person name="Schmutz J."/>
            <person name="Larimer F."/>
            <person name="Land M."/>
            <person name="Hauser L."/>
            <person name="Kyrpides N."/>
            <person name="Mikhailova N."/>
            <person name="Nelson K."/>
            <person name="Gogarten J.P."/>
            <person name="Noll K."/>
            <person name="Richardson P."/>
        </authorList>
    </citation>
    <scope>NUCLEOTIDE SEQUENCE [LARGE SCALE GENOMIC DNA]</scope>
    <source>
        <strain>ATCC BAA-488 / DSM 13995 / JCM 10881 / RKU-1</strain>
    </source>
</reference>
<evidence type="ECO:0000255" key="1">
    <source>
        <dbReference type="HAMAP-Rule" id="MF_00568"/>
    </source>
</evidence>
<protein>
    <recommendedName>
        <fullName evidence="1">Quinolinate synthase</fullName>
        <ecNumber evidence="1">2.5.1.72</ecNumber>
    </recommendedName>
</protein>
<name>NADA_THEP1</name>
<dbReference type="EC" id="2.5.1.72" evidence="1"/>
<dbReference type="EMBL" id="CP000702">
    <property type="protein sequence ID" value="ABQ47161.1"/>
    <property type="molecule type" value="Genomic_DNA"/>
</dbReference>
<dbReference type="RefSeq" id="WP_011943675.1">
    <property type="nucleotide sequence ID" value="NC_009486.1"/>
</dbReference>
<dbReference type="SMR" id="A5ILT8"/>
<dbReference type="STRING" id="390874.Tpet_1147"/>
<dbReference type="KEGG" id="tpt:Tpet_1147"/>
<dbReference type="eggNOG" id="COG0379">
    <property type="taxonomic scope" value="Bacteria"/>
</dbReference>
<dbReference type="HOGENOM" id="CLU_047382_0_0_0"/>
<dbReference type="UniPathway" id="UPA00253">
    <property type="reaction ID" value="UER00327"/>
</dbReference>
<dbReference type="Proteomes" id="UP000006558">
    <property type="component" value="Chromosome"/>
</dbReference>
<dbReference type="GO" id="GO:0005829">
    <property type="term" value="C:cytosol"/>
    <property type="evidence" value="ECO:0007669"/>
    <property type="project" value="TreeGrafter"/>
</dbReference>
<dbReference type="GO" id="GO:0051539">
    <property type="term" value="F:4 iron, 4 sulfur cluster binding"/>
    <property type="evidence" value="ECO:0007669"/>
    <property type="project" value="UniProtKB-KW"/>
</dbReference>
<dbReference type="GO" id="GO:0046872">
    <property type="term" value="F:metal ion binding"/>
    <property type="evidence" value="ECO:0007669"/>
    <property type="project" value="UniProtKB-KW"/>
</dbReference>
<dbReference type="GO" id="GO:0008987">
    <property type="term" value="F:quinolinate synthetase A activity"/>
    <property type="evidence" value="ECO:0007669"/>
    <property type="project" value="UniProtKB-UniRule"/>
</dbReference>
<dbReference type="GO" id="GO:0034628">
    <property type="term" value="P:'de novo' NAD biosynthetic process from L-aspartate"/>
    <property type="evidence" value="ECO:0007669"/>
    <property type="project" value="TreeGrafter"/>
</dbReference>
<dbReference type="FunFam" id="3.40.50.10800:FF:000001">
    <property type="entry name" value="Quinolinate synthase A"/>
    <property type="match status" value="1"/>
</dbReference>
<dbReference type="Gene3D" id="3.40.50.10800">
    <property type="entry name" value="NadA-like"/>
    <property type="match status" value="3"/>
</dbReference>
<dbReference type="HAMAP" id="MF_00568">
    <property type="entry name" value="NadA_type2"/>
    <property type="match status" value="1"/>
</dbReference>
<dbReference type="InterPro" id="IPR003473">
    <property type="entry name" value="NadA"/>
</dbReference>
<dbReference type="InterPro" id="IPR036094">
    <property type="entry name" value="NadA_sf"/>
</dbReference>
<dbReference type="InterPro" id="IPR023066">
    <property type="entry name" value="Quinolinate_synth_type2"/>
</dbReference>
<dbReference type="NCBIfam" id="TIGR00550">
    <property type="entry name" value="nadA"/>
    <property type="match status" value="1"/>
</dbReference>
<dbReference type="NCBIfam" id="NF006878">
    <property type="entry name" value="PRK09375.1-2"/>
    <property type="match status" value="1"/>
</dbReference>
<dbReference type="PANTHER" id="PTHR30573:SF0">
    <property type="entry name" value="QUINOLINATE SYNTHASE, CHLOROPLASTIC"/>
    <property type="match status" value="1"/>
</dbReference>
<dbReference type="PANTHER" id="PTHR30573">
    <property type="entry name" value="QUINOLINATE SYNTHETASE A"/>
    <property type="match status" value="1"/>
</dbReference>
<dbReference type="Pfam" id="PF02445">
    <property type="entry name" value="NadA"/>
    <property type="match status" value="1"/>
</dbReference>
<dbReference type="SUPFAM" id="SSF142754">
    <property type="entry name" value="NadA-like"/>
    <property type="match status" value="1"/>
</dbReference>